<keyword id="KW-0963">Cytoplasm</keyword>
<keyword id="KW-1185">Reference proteome</keyword>
<keyword id="KW-0690">Ribosome biogenesis</keyword>
<keyword id="KW-0694">RNA-binding</keyword>
<keyword id="KW-0699">rRNA-binding</keyword>
<feature type="chain" id="PRO_1000198389" description="Dual-action ribosomal maturation protein DarP">
    <location>
        <begin position="1"/>
        <end position="186"/>
    </location>
</feature>
<proteinExistence type="inferred from homology"/>
<accession>B4EX40</accession>
<name>DARP_PROMH</name>
<dbReference type="EMBL" id="AM942759">
    <property type="protein sequence ID" value="CAR47111.1"/>
    <property type="molecule type" value="Genomic_DNA"/>
</dbReference>
<dbReference type="SMR" id="B4EX40"/>
<dbReference type="EnsemblBacteria" id="CAR47111">
    <property type="protein sequence ID" value="CAR47111"/>
    <property type="gene ID" value="PMI3641"/>
</dbReference>
<dbReference type="GeneID" id="6800838"/>
<dbReference type="KEGG" id="pmr:PMI3641"/>
<dbReference type="eggNOG" id="COG3028">
    <property type="taxonomic scope" value="Bacteria"/>
</dbReference>
<dbReference type="HOGENOM" id="CLU_106757_2_0_6"/>
<dbReference type="Proteomes" id="UP000008319">
    <property type="component" value="Chromosome"/>
</dbReference>
<dbReference type="GO" id="GO:0005829">
    <property type="term" value="C:cytosol"/>
    <property type="evidence" value="ECO:0007669"/>
    <property type="project" value="TreeGrafter"/>
</dbReference>
<dbReference type="GO" id="GO:0043022">
    <property type="term" value="F:ribosome binding"/>
    <property type="evidence" value="ECO:0007669"/>
    <property type="project" value="UniProtKB-UniRule"/>
</dbReference>
<dbReference type="GO" id="GO:0019843">
    <property type="term" value="F:rRNA binding"/>
    <property type="evidence" value="ECO:0007669"/>
    <property type="project" value="UniProtKB-UniRule"/>
</dbReference>
<dbReference type="GO" id="GO:1902626">
    <property type="term" value="P:assembly of large subunit precursor of preribosome"/>
    <property type="evidence" value="ECO:0007669"/>
    <property type="project" value="UniProtKB-UniRule"/>
</dbReference>
<dbReference type="CDD" id="cd16331">
    <property type="entry name" value="YjgA-like"/>
    <property type="match status" value="1"/>
</dbReference>
<dbReference type="FunFam" id="1.10.60.30:FF:000002">
    <property type="entry name" value="UPF0307 protein YjgA"/>
    <property type="match status" value="1"/>
</dbReference>
<dbReference type="Gene3D" id="1.10.60.30">
    <property type="entry name" value="PSPTO4464-like domains"/>
    <property type="match status" value="2"/>
</dbReference>
<dbReference type="HAMAP" id="MF_00765">
    <property type="entry name" value="DarP"/>
    <property type="match status" value="1"/>
</dbReference>
<dbReference type="InterPro" id="IPR006839">
    <property type="entry name" value="DarP"/>
</dbReference>
<dbReference type="InterPro" id="IPR023153">
    <property type="entry name" value="DarP_sf"/>
</dbReference>
<dbReference type="NCBIfam" id="NF003593">
    <property type="entry name" value="PRK05255.1-1"/>
    <property type="match status" value="1"/>
</dbReference>
<dbReference type="PANTHER" id="PTHR38101">
    <property type="entry name" value="UPF0307 PROTEIN YJGA"/>
    <property type="match status" value="1"/>
</dbReference>
<dbReference type="PANTHER" id="PTHR38101:SF1">
    <property type="entry name" value="UPF0307 PROTEIN YJGA"/>
    <property type="match status" value="1"/>
</dbReference>
<dbReference type="Pfam" id="PF04751">
    <property type="entry name" value="DarP"/>
    <property type="match status" value="1"/>
</dbReference>
<dbReference type="PIRSF" id="PIRSF016183">
    <property type="entry name" value="UCP016183"/>
    <property type="match status" value="1"/>
</dbReference>
<dbReference type="SUPFAM" id="SSF158710">
    <property type="entry name" value="PSPTO4464-like"/>
    <property type="match status" value="1"/>
</dbReference>
<reference key="1">
    <citation type="journal article" date="2008" name="J. Bacteriol.">
        <title>Complete genome sequence of uropathogenic Proteus mirabilis, a master of both adherence and motility.</title>
        <authorList>
            <person name="Pearson M.M."/>
            <person name="Sebaihia M."/>
            <person name="Churcher C."/>
            <person name="Quail M.A."/>
            <person name="Seshasayee A.S."/>
            <person name="Luscombe N.M."/>
            <person name="Abdellah Z."/>
            <person name="Arrosmith C."/>
            <person name="Atkin B."/>
            <person name="Chillingworth T."/>
            <person name="Hauser H."/>
            <person name="Jagels K."/>
            <person name="Moule S."/>
            <person name="Mungall K."/>
            <person name="Norbertczak H."/>
            <person name="Rabbinowitsch E."/>
            <person name="Walker D."/>
            <person name="Whithead S."/>
            <person name="Thomson N.R."/>
            <person name="Rather P.N."/>
            <person name="Parkhill J."/>
            <person name="Mobley H.L.T."/>
        </authorList>
    </citation>
    <scope>NUCLEOTIDE SEQUENCE [LARGE SCALE GENOMIC DNA]</scope>
    <source>
        <strain>HI4320</strain>
    </source>
</reference>
<evidence type="ECO:0000255" key="1">
    <source>
        <dbReference type="HAMAP-Rule" id="MF_00765"/>
    </source>
</evidence>
<comment type="function">
    <text evidence="1">Member of a network of 50S ribosomal subunit biogenesis factors which assembles along the 30S-50S interface, preventing incorrect 23S rRNA structures from forming. Promotes peptidyl transferase center (PTC) maturation.</text>
</comment>
<comment type="subcellular location">
    <subcellularLocation>
        <location evidence="1">Cytoplasm</location>
    </subcellularLocation>
    <text evidence="1">Associates with late stage pre-50S ribosomal subunits.</text>
</comment>
<comment type="similarity">
    <text evidence="1">Belongs to the DarP family.</text>
</comment>
<sequence length="186" mass="21916">MAKQPEEWHYLNPEFDNTPLEEEEEEEIIWVSKSEIKRDAEALKKLGTELVELSAQELERVPLDEKLLASIKLAQKVQREARRRQIQYIGKLLRNVDEEPIRQALDKLKNRHNQQILVLHKLEDLRTRLIDGGNEVIEEVVALYPMADRQQLRTLIRNAKKEKEANKPPKSFRLLFQYLKDLSESA</sequence>
<protein>
    <recommendedName>
        <fullName evidence="1">Dual-action ribosomal maturation protein DarP</fullName>
    </recommendedName>
    <alternativeName>
        <fullName evidence="1">Large ribosomal subunit assembly factor DarP</fullName>
    </alternativeName>
</protein>
<gene>
    <name evidence="1" type="primary">darP</name>
    <name type="ordered locus">PMI3641</name>
</gene>
<organism>
    <name type="scientific">Proteus mirabilis (strain HI4320)</name>
    <dbReference type="NCBI Taxonomy" id="529507"/>
    <lineage>
        <taxon>Bacteria</taxon>
        <taxon>Pseudomonadati</taxon>
        <taxon>Pseudomonadota</taxon>
        <taxon>Gammaproteobacteria</taxon>
        <taxon>Enterobacterales</taxon>
        <taxon>Morganellaceae</taxon>
        <taxon>Proteus</taxon>
    </lineage>
</organism>